<feature type="chain" id="PRO_1000136201" description="UPF0227 protein YcfP">
    <location>
        <begin position="1"/>
        <end position="180"/>
    </location>
</feature>
<reference key="1">
    <citation type="journal article" date="2011" name="J. Bacteriol.">
        <title>Comparative genomics of 28 Salmonella enterica isolates: evidence for CRISPR-mediated adaptive sublineage evolution.</title>
        <authorList>
            <person name="Fricke W.F."/>
            <person name="Mammel M.K."/>
            <person name="McDermott P.F."/>
            <person name="Tartera C."/>
            <person name="White D.G."/>
            <person name="Leclerc J.E."/>
            <person name="Ravel J."/>
            <person name="Cebula T.A."/>
        </authorList>
    </citation>
    <scope>NUCLEOTIDE SEQUENCE [LARGE SCALE GENOMIC DNA]</scope>
    <source>
        <strain>CVM19633</strain>
    </source>
</reference>
<sequence length="180" mass="21093">MIIYLHGFDSNSPGNHEKVLQLQFIDPDVRLVSYSTRHPKHDMQHLLKEVDKMLQLNVDERPLICGVGLGGYWAERIGFLCDIRQVVFNPNLFPYENMEGKIDRPEEYADIATKCVTNFREKNRDRCLVILSRHDEALDSQRSAQALHPYYEIVWDEEQTHKFKNISPHLQRIKAFKTLG</sequence>
<dbReference type="EMBL" id="CP001127">
    <property type="protein sequence ID" value="ACF88971.1"/>
    <property type="molecule type" value="Genomic_DNA"/>
</dbReference>
<dbReference type="RefSeq" id="WP_000587945.1">
    <property type="nucleotide sequence ID" value="NC_011094.1"/>
</dbReference>
<dbReference type="SMR" id="B4TTI0"/>
<dbReference type="ESTHER" id="salty-ycfp">
    <property type="family name" value="abh_upf00227"/>
</dbReference>
<dbReference type="KEGG" id="sew:SeSA_A1286"/>
<dbReference type="HOGENOM" id="CLU_128769_0_0_6"/>
<dbReference type="Proteomes" id="UP000001865">
    <property type="component" value="Chromosome"/>
</dbReference>
<dbReference type="FunFam" id="3.40.50.1820:FF:000007">
    <property type="entry name" value="UPF0227 protein YcfP"/>
    <property type="match status" value="1"/>
</dbReference>
<dbReference type="Gene3D" id="3.40.50.1820">
    <property type="entry name" value="alpha/beta hydrolase"/>
    <property type="match status" value="1"/>
</dbReference>
<dbReference type="HAMAP" id="MF_01047">
    <property type="entry name" value="UPF0227"/>
    <property type="match status" value="1"/>
</dbReference>
<dbReference type="InterPro" id="IPR029058">
    <property type="entry name" value="AB_hydrolase_fold"/>
</dbReference>
<dbReference type="InterPro" id="IPR022987">
    <property type="entry name" value="UPF0227"/>
</dbReference>
<dbReference type="InterPro" id="IPR008886">
    <property type="entry name" value="UPF0227/Esterase_YqiA"/>
</dbReference>
<dbReference type="NCBIfam" id="NF003431">
    <property type="entry name" value="PRK04940.1"/>
    <property type="match status" value="1"/>
</dbReference>
<dbReference type="PANTHER" id="PTHR35602">
    <property type="entry name" value="ESTERASE YQIA-RELATED"/>
    <property type="match status" value="1"/>
</dbReference>
<dbReference type="PANTHER" id="PTHR35602:SF2">
    <property type="entry name" value="UPF0227 PROTEIN YCFP"/>
    <property type="match status" value="1"/>
</dbReference>
<dbReference type="Pfam" id="PF05728">
    <property type="entry name" value="UPF0227"/>
    <property type="match status" value="1"/>
</dbReference>
<dbReference type="SUPFAM" id="SSF53474">
    <property type="entry name" value="alpha/beta-Hydrolases"/>
    <property type="match status" value="1"/>
</dbReference>
<proteinExistence type="inferred from homology"/>
<organism>
    <name type="scientific">Salmonella schwarzengrund (strain CVM19633)</name>
    <dbReference type="NCBI Taxonomy" id="439843"/>
    <lineage>
        <taxon>Bacteria</taxon>
        <taxon>Pseudomonadati</taxon>
        <taxon>Pseudomonadota</taxon>
        <taxon>Gammaproteobacteria</taxon>
        <taxon>Enterobacterales</taxon>
        <taxon>Enterobacteriaceae</taxon>
        <taxon>Salmonella</taxon>
    </lineage>
</organism>
<evidence type="ECO:0000255" key="1">
    <source>
        <dbReference type="HAMAP-Rule" id="MF_01047"/>
    </source>
</evidence>
<protein>
    <recommendedName>
        <fullName evidence="1">UPF0227 protein YcfP</fullName>
    </recommendedName>
</protein>
<comment type="similarity">
    <text evidence="1">Belongs to the UPF0227 family.</text>
</comment>
<accession>B4TTI0</accession>
<name>YCFP_SALSV</name>
<gene>
    <name evidence="1" type="primary">ycfP</name>
    <name type="ordered locus">SeSA_A1286</name>
</gene>